<name>MNTP_ECO5E</name>
<protein>
    <recommendedName>
        <fullName evidence="1">Probable manganese efflux pump MntP</fullName>
    </recommendedName>
</protein>
<sequence length="188" mass="20117">MNITATVLLAFGMSMDAFAASIGKGATLHKPKFSEALRTGLIFGAVETLTPLIGWGMGMLASRFVLEWNHWIAFVLLIFLGGRMIIEGFRGADDEDEEPRRRHGFWLLVTTAIATSLDAMAVGVGLAFLQVNIIATALAIGCATLIMSTLGMMVGRFIGSIIGKKAEILGGLVLIGIGVQILWTHFHG</sequence>
<proteinExistence type="inferred from homology"/>
<gene>
    <name evidence="1" type="primary">mntP</name>
    <name type="synonym">yebN</name>
    <name type="ordered locus">ECH74115_2553</name>
</gene>
<comment type="function">
    <text evidence="1">Probably functions as a manganese efflux pump.</text>
</comment>
<comment type="subcellular location">
    <subcellularLocation>
        <location evidence="1">Cell inner membrane</location>
        <topology evidence="1">Multi-pass membrane protein</topology>
    </subcellularLocation>
</comment>
<comment type="similarity">
    <text evidence="1">Belongs to the MntP (TC 9.B.29) family.</text>
</comment>
<dbReference type="EMBL" id="CP001164">
    <property type="protein sequence ID" value="ACI37795.1"/>
    <property type="molecule type" value="Genomic_DNA"/>
</dbReference>
<dbReference type="RefSeq" id="WP_001296134.1">
    <property type="nucleotide sequence ID" value="NC_011353.1"/>
</dbReference>
<dbReference type="GeneID" id="93776070"/>
<dbReference type="KEGG" id="ecf:ECH74115_2553"/>
<dbReference type="HOGENOM" id="CLU_096410_0_0_6"/>
<dbReference type="GO" id="GO:0005886">
    <property type="term" value="C:plasma membrane"/>
    <property type="evidence" value="ECO:0007669"/>
    <property type="project" value="UniProtKB-SubCell"/>
</dbReference>
<dbReference type="GO" id="GO:0005384">
    <property type="term" value="F:manganese ion transmembrane transporter activity"/>
    <property type="evidence" value="ECO:0007669"/>
    <property type="project" value="UniProtKB-UniRule"/>
</dbReference>
<dbReference type="HAMAP" id="MF_01521">
    <property type="entry name" value="MntP_pump"/>
    <property type="match status" value="1"/>
</dbReference>
<dbReference type="InterPro" id="IPR003810">
    <property type="entry name" value="Mntp/YtaF"/>
</dbReference>
<dbReference type="InterPro" id="IPR022929">
    <property type="entry name" value="Put_MntP"/>
</dbReference>
<dbReference type="NCBIfam" id="NF008546">
    <property type="entry name" value="PRK11469.1"/>
    <property type="match status" value="1"/>
</dbReference>
<dbReference type="PANTHER" id="PTHR35529">
    <property type="entry name" value="MANGANESE EFFLUX PUMP MNTP-RELATED"/>
    <property type="match status" value="1"/>
</dbReference>
<dbReference type="PANTHER" id="PTHR35529:SF1">
    <property type="entry name" value="MANGANESE EFFLUX PUMP MNTP-RELATED"/>
    <property type="match status" value="1"/>
</dbReference>
<dbReference type="Pfam" id="PF02659">
    <property type="entry name" value="Mntp"/>
    <property type="match status" value="1"/>
</dbReference>
<organism>
    <name type="scientific">Escherichia coli O157:H7 (strain EC4115 / EHEC)</name>
    <dbReference type="NCBI Taxonomy" id="444450"/>
    <lineage>
        <taxon>Bacteria</taxon>
        <taxon>Pseudomonadati</taxon>
        <taxon>Pseudomonadota</taxon>
        <taxon>Gammaproteobacteria</taxon>
        <taxon>Enterobacterales</taxon>
        <taxon>Enterobacteriaceae</taxon>
        <taxon>Escherichia</taxon>
    </lineage>
</organism>
<reference key="1">
    <citation type="journal article" date="2011" name="Proc. Natl. Acad. Sci. U.S.A.">
        <title>Genomic anatomy of Escherichia coli O157:H7 outbreaks.</title>
        <authorList>
            <person name="Eppinger M."/>
            <person name="Mammel M.K."/>
            <person name="Leclerc J.E."/>
            <person name="Ravel J."/>
            <person name="Cebula T.A."/>
        </authorList>
    </citation>
    <scope>NUCLEOTIDE SEQUENCE [LARGE SCALE GENOMIC DNA]</scope>
    <source>
        <strain>EC4115 / EHEC</strain>
    </source>
</reference>
<accession>B5YQW3</accession>
<evidence type="ECO:0000255" key="1">
    <source>
        <dbReference type="HAMAP-Rule" id="MF_01521"/>
    </source>
</evidence>
<keyword id="KW-0997">Cell inner membrane</keyword>
<keyword id="KW-1003">Cell membrane</keyword>
<keyword id="KW-0406">Ion transport</keyword>
<keyword id="KW-0464">Manganese</keyword>
<keyword id="KW-0472">Membrane</keyword>
<keyword id="KW-0812">Transmembrane</keyword>
<keyword id="KW-1133">Transmembrane helix</keyword>
<keyword id="KW-0813">Transport</keyword>
<feature type="chain" id="PRO_1000200026" description="Probable manganese efflux pump MntP">
    <location>
        <begin position="1"/>
        <end position="188"/>
    </location>
</feature>
<feature type="transmembrane region" description="Helical" evidence="1">
    <location>
        <begin position="3"/>
        <end position="23"/>
    </location>
</feature>
<feature type="transmembrane region" description="Helical" evidence="1">
    <location>
        <begin position="66"/>
        <end position="86"/>
    </location>
</feature>
<feature type="transmembrane region" description="Helical" evidence="1">
    <location>
        <begin position="106"/>
        <end position="128"/>
    </location>
</feature>
<feature type="transmembrane region" description="Helical" evidence="1">
    <location>
        <begin position="143"/>
        <end position="163"/>
    </location>
</feature>
<feature type="transmembrane region" description="Helical" evidence="1">
    <location>
        <begin position="168"/>
        <end position="188"/>
    </location>
</feature>